<keyword id="KW-0030">Aminoacyl-tRNA synthetase</keyword>
<keyword id="KW-0067">ATP-binding</keyword>
<keyword id="KW-0963">Cytoplasm</keyword>
<keyword id="KW-0436">Ligase</keyword>
<keyword id="KW-0460">Magnesium</keyword>
<keyword id="KW-0479">Metal-binding</keyword>
<keyword id="KW-0547">Nucleotide-binding</keyword>
<keyword id="KW-0648">Protein biosynthesis</keyword>
<dbReference type="EC" id="6.1.1.20" evidence="1"/>
<dbReference type="EMBL" id="CP001396">
    <property type="protein sequence ID" value="ACR64017.1"/>
    <property type="molecule type" value="Genomic_DNA"/>
</dbReference>
<dbReference type="RefSeq" id="WP_000018596.1">
    <property type="nucleotide sequence ID" value="NC_012759.1"/>
</dbReference>
<dbReference type="SMR" id="C4ZYH6"/>
<dbReference type="GeneID" id="75205640"/>
<dbReference type="KEGG" id="ebw:BWG_1528"/>
<dbReference type="HOGENOM" id="CLU_025086_0_1_6"/>
<dbReference type="GO" id="GO:0005737">
    <property type="term" value="C:cytoplasm"/>
    <property type="evidence" value="ECO:0007669"/>
    <property type="project" value="UniProtKB-SubCell"/>
</dbReference>
<dbReference type="GO" id="GO:0005524">
    <property type="term" value="F:ATP binding"/>
    <property type="evidence" value="ECO:0007669"/>
    <property type="project" value="UniProtKB-UniRule"/>
</dbReference>
<dbReference type="GO" id="GO:0000287">
    <property type="term" value="F:magnesium ion binding"/>
    <property type="evidence" value="ECO:0007669"/>
    <property type="project" value="UniProtKB-UniRule"/>
</dbReference>
<dbReference type="GO" id="GO:0004826">
    <property type="term" value="F:phenylalanine-tRNA ligase activity"/>
    <property type="evidence" value="ECO:0007669"/>
    <property type="project" value="UniProtKB-UniRule"/>
</dbReference>
<dbReference type="GO" id="GO:0000049">
    <property type="term" value="F:tRNA binding"/>
    <property type="evidence" value="ECO:0007669"/>
    <property type="project" value="InterPro"/>
</dbReference>
<dbReference type="GO" id="GO:0006432">
    <property type="term" value="P:phenylalanyl-tRNA aminoacylation"/>
    <property type="evidence" value="ECO:0007669"/>
    <property type="project" value="UniProtKB-UniRule"/>
</dbReference>
<dbReference type="CDD" id="cd00496">
    <property type="entry name" value="PheRS_alpha_core"/>
    <property type="match status" value="1"/>
</dbReference>
<dbReference type="FunFam" id="3.30.930.10:FF:000003">
    <property type="entry name" value="Phenylalanine--tRNA ligase alpha subunit"/>
    <property type="match status" value="1"/>
</dbReference>
<dbReference type="Gene3D" id="3.30.930.10">
    <property type="entry name" value="Bira Bifunctional Protein, Domain 2"/>
    <property type="match status" value="1"/>
</dbReference>
<dbReference type="HAMAP" id="MF_00281">
    <property type="entry name" value="Phe_tRNA_synth_alpha1"/>
    <property type="match status" value="1"/>
</dbReference>
<dbReference type="InterPro" id="IPR006195">
    <property type="entry name" value="aa-tRNA-synth_II"/>
</dbReference>
<dbReference type="InterPro" id="IPR045864">
    <property type="entry name" value="aa-tRNA-synth_II/BPL/LPL"/>
</dbReference>
<dbReference type="InterPro" id="IPR004529">
    <property type="entry name" value="Phe-tRNA-synth_IIc_asu"/>
</dbReference>
<dbReference type="InterPro" id="IPR004188">
    <property type="entry name" value="Phe-tRNA_ligase_II_N"/>
</dbReference>
<dbReference type="InterPro" id="IPR022911">
    <property type="entry name" value="Phe_tRNA_ligase_alpha1_bac"/>
</dbReference>
<dbReference type="InterPro" id="IPR002319">
    <property type="entry name" value="Phenylalanyl-tRNA_Synthase"/>
</dbReference>
<dbReference type="InterPro" id="IPR010978">
    <property type="entry name" value="tRNA-bd_arm"/>
</dbReference>
<dbReference type="NCBIfam" id="TIGR00468">
    <property type="entry name" value="pheS"/>
    <property type="match status" value="1"/>
</dbReference>
<dbReference type="PANTHER" id="PTHR11538:SF41">
    <property type="entry name" value="PHENYLALANINE--TRNA LIGASE, MITOCHONDRIAL"/>
    <property type="match status" value="1"/>
</dbReference>
<dbReference type="PANTHER" id="PTHR11538">
    <property type="entry name" value="PHENYLALANYL-TRNA SYNTHETASE"/>
    <property type="match status" value="1"/>
</dbReference>
<dbReference type="Pfam" id="PF02912">
    <property type="entry name" value="Phe_tRNA-synt_N"/>
    <property type="match status" value="1"/>
</dbReference>
<dbReference type="Pfam" id="PF01409">
    <property type="entry name" value="tRNA-synt_2d"/>
    <property type="match status" value="1"/>
</dbReference>
<dbReference type="SUPFAM" id="SSF55681">
    <property type="entry name" value="Class II aaRS and biotin synthetases"/>
    <property type="match status" value="1"/>
</dbReference>
<dbReference type="SUPFAM" id="SSF46589">
    <property type="entry name" value="tRNA-binding arm"/>
    <property type="match status" value="1"/>
</dbReference>
<dbReference type="PROSITE" id="PS50862">
    <property type="entry name" value="AA_TRNA_LIGASE_II"/>
    <property type="match status" value="1"/>
</dbReference>
<proteinExistence type="inferred from homology"/>
<feature type="chain" id="PRO_1000204823" description="Phenylalanine--tRNA ligase alpha subunit">
    <location>
        <begin position="1"/>
        <end position="327"/>
    </location>
</feature>
<feature type="binding site" evidence="1">
    <location>
        <position position="252"/>
    </location>
    <ligand>
        <name>Mg(2+)</name>
        <dbReference type="ChEBI" id="CHEBI:18420"/>
        <note>shared with beta subunit</note>
    </ligand>
</feature>
<accession>C4ZYH6</accession>
<comment type="catalytic activity">
    <reaction evidence="1">
        <text>tRNA(Phe) + L-phenylalanine + ATP = L-phenylalanyl-tRNA(Phe) + AMP + diphosphate + H(+)</text>
        <dbReference type="Rhea" id="RHEA:19413"/>
        <dbReference type="Rhea" id="RHEA-COMP:9668"/>
        <dbReference type="Rhea" id="RHEA-COMP:9699"/>
        <dbReference type="ChEBI" id="CHEBI:15378"/>
        <dbReference type="ChEBI" id="CHEBI:30616"/>
        <dbReference type="ChEBI" id="CHEBI:33019"/>
        <dbReference type="ChEBI" id="CHEBI:58095"/>
        <dbReference type="ChEBI" id="CHEBI:78442"/>
        <dbReference type="ChEBI" id="CHEBI:78531"/>
        <dbReference type="ChEBI" id="CHEBI:456215"/>
        <dbReference type="EC" id="6.1.1.20"/>
    </reaction>
</comment>
<comment type="cofactor">
    <cofactor evidence="1">
        <name>Mg(2+)</name>
        <dbReference type="ChEBI" id="CHEBI:18420"/>
    </cofactor>
    <text evidence="1">Binds 2 magnesium ions per tetramer.</text>
</comment>
<comment type="subunit">
    <text evidence="1">Tetramer of two alpha and two beta subunits.</text>
</comment>
<comment type="subcellular location">
    <subcellularLocation>
        <location evidence="1">Cytoplasm</location>
    </subcellularLocation>
</comment>
<comment type="similarity">
    <text evidence="1">Belongs to the class-II aminoacyl-tRNA synthetase family. Phe-tRNA synthetase alpha subunit type 1 subfamily.</text>
</comment>
<gene>
    <name evidence="1" type="primary">pheS</name>
    <name type="ordered locus">BWG_1528</name>
</gene>
<organism>
    <name type="scientific">Escherichia coli (strain K12 / MC4100 / BW2952)</name>
    <dbReference type="NCBI Taxonomy" id="595496"/>
    <lineage>
        <taxon>Bacteria</taxon>
        <taxon>Pseudomonadati</taxon>
        <taxon>Pseudomonadota</taxon>
        <taxon>Gammaproteobacteria</taxon>
        <taxon>Enterobacterales</taxon>
        <taxon>Enterobacteriaceae</taxon>
        <taxon>Escherichia</taxon>
    </lineage>
</organism>
<sequence>MSHLAELVASAKAAISQASDVAALDNVRVEYLGKKGHLTLQMTTLRELPPEERPAAGAVINEAKEQVQQALNARKAELESAALNARLAAETIDVSLPGRRIENGGLHPVTRTIDRIESFFGELGFTVATGPEIEDDYHNFDALNIPGHHPARADHDTFWFDTTRLLRTQTSGVQIRTMKAQQPPIRIIAPGRVYRNDYDQTHTPMFHQMEGLIVDTNISFTNLKGTLHDFLRNFFEEDLQIRFRPSYFPFTEPSAEVDVMGKNGKWLEVLGCGMVHPNVLRNVGIDPEVYSGFAFGMGMERLTMLRYGVTDLRSFFENDLRFLKQFK</sequence>
<protein>
    <recommendedName>
        <fullName evidence="1">Phenylalanine--tRNA ligase alpha subunit</fullName>
        <ecNumber evidence="1">6.1.1.20</ecNumber>
    </recommendedName>
    <alternativeName>
        <fullName evidence="1">Phenylalanyl-tRNA synthetase alpha subunit</fullName>
        <shortName evidence="1">PheRS</shortName>
    </alternativeName>
</protein>
<reference key="1">
    <citation type="journal article" date="2009" name="J. Bacteriol.">
        <title>Genomic sequencing reveals regulatory mutations and recombinational events in the widely used MC4100 lineage of Escherichia coli K-12.</title>
        <authorList>
            <person name="Ferenci T."/>
            <person name="Zhou Z."/>
            <person name="Betteridge T."/>
            <person name="Ren Y."/>
            <person name="Liu Y."/>
            <person name="Feng L."/>
            <person name="Reeves P.R."/>
            <person name="Wang L."/>
        </authorList>
    </citation>
    <scope>NUCLEOTIDE SEQUENCE [LARGE SCALE GENOMIC DNA]</scope>
    <source>
        <strain>K12 / MC4100 / BW2952</strain>
    </source>
</reference>
<name>SYFA_ECOBW</name>
<evidence type="ECO:0000255" key="1">
    <source>
        <dbReference type="HAMAP-Rule" id="MF_00281"/>
    </source>
</evidence>